<sequence>MKIALIAHDKKKEEMIELAKDFEDKLSKHILVATGTTGLKIMQNTSLEVKRCKSGPLGGDQEIGAMVANHDVDMVIFLRDPLTAQPHEPDISALLRLCDVYKVPLATNTESAKLIMADI</sequence>
<organism>
    <name type="scientific">Clostridium perfringens (strain 13 / Type A)</name>
    <dbReference type="NCBI Taxonomy" id="195102"/>
    <lineage>
        <taxon>Bacteria</taxon>
        <taxon>Bacillati</taxon>
        <taxon>Bacillota</taxon>
        <taxon>Clostridia</taxon>
        <taxon>Eubacteriales</taxon>
        <taxon>Clostridiaceae</taxon>
        <taxon>Clostridium</taxon>
    </lineage>
</organism>
<accession>Q8XLN2</accession>
<protein>
    <recommendedName>
        <fullName evidence="1">Methylglyoxal synthase</fullName>
        <shortName evidence="1">MGS</shortName>
        <ecNumber evidence="1">4.2.3.3</ecNumber>
    </recommendedName>
</protein>
<dbReference type="EC" id="4.2.3.3" evidence="1"/>
<dbReference type="EMBL" id="BA000016">
    <property type="protein sequence ID" value="BAB80715.1"/>
    <property type="molecule type" value="Genomic_DNA"/>
</dbReference>
<dbReference type="RefSeq" id="WP_003448652.1">
    <property type="nucleotide sequence ID" value="NC_003366.1"/>
</dbReference>
<dbReference type="SMR" id="Q8XLN2"/>
<dbReference type="STRING" id="195102.gene:10490272"/>
<dbReference type="KEGG" id="cpe:CPE1009"/>
<dbReference type="HOGENOM" id="CLU_120420_1_0_9"/>
<dbReference type="Proteomes" id="UP000000818">
    <property type="component" value="Chromosome"/>
</dbReference>
<dbReference type="GO" id="GO:0005829">
    <property type="term" value="C:cytosol"/>
    <property type="evidence" value="ECO:0007669"/>
    <property type="project" value="TreeGrafter"/>
</dbReference>
<dbReference type="GO" id="GO:0008929">
    <property type="term" value="F:methylglyoxal synthase activity"/>
    <property type="evidence" value="ECO:0007669"/>
    <property type="project" value="UniProtKB-UniRule"/>
</dbReference>
<dbReference type="GO" id="GO:0019242">
    <property type="term" value="P:methylglyoxal biosynthetic process"/>
    <property type="evidence" value="ECO:0007669"/>
    <property type="project" value="UniProtKB-UniRule"/>
</dbReference>
<dbReference type="CDD" id="cd01422">
    <property type="entry name" value="MGS"/>
    <property type="match status" value="1"/>
</dbReference>
<dbReference type="Gene3D" id="3.40.50.1380">
    <property type="entry name" value="Methylglyoxal synthase-like domain"/>
    <property type="match status" value="1"/>
</dbReference>
<dbReference type="HAMAP" id="MF_00549">
    <property type="entry name" value="Methylglyoxal_synth"/>
    <property type="match status" value="1"/>
</dbReference>
<dbReference type="InterPro" id="IPR004363">
    <property type="entry name" value="Methylgl_synth"/>
</dbReference>
<dbReference type="InterPro" id="IPR018148">
    <property type="entry name" value="Methylglyoxal_synth_AS"/>
</dbReference>
<dbReference type="InterPro" id="IPR011607">
    <property type="entry name" value="MGS-like_dom"/>
</dbReference>
<dbReference type="InterPro" id="IPR036914">
    <property type="entry name" value="MGS-like_dom_sf"/>
</dbReference>
<dbReference type="NCBIfam" id="TIGR00160">
    <property type="entry name" value="MGSA"/>
    <property type="match status" value="1"/>
</dbReference>
<dbReference type="NCBIfam" id="NF003559">
    <property type="entry name" value="PRK05234.1"/>
    <property type="match status" value="1"/>
</dbReference>
<dbReference type="PANTHER" id="PTHR30492">
    <property type="entry name" value="METHYLGLYOXAL SYNTHASE"/>
    <property type="match status" value="1"/>
</dbReference>
<dbReference type="PANTHER" id="PTHR30492:SF0">
    <property type="entry name" value="METHYLGLYOXAL SYNTHASE"/>
    <property type="match status" value="1"/>
</dbReference>
<dbReference type="Pfam" id="PF02142">
    <property type="entry name" value="MGS"/>
    <property type="match status" value="1"/>
</dbReference>
<dbReference type="PIRSF" id="PIRSF006614">
    <property type="entry name" value="Methylglyox_syn"/>
    <property type="match status" value="1"/>
</dbReference>
<dbReference type="SMART" id="SM00851">
    <property type="entry name" value="MGS"/>
    <property type="match status" value="1"/>
</dbReference>
<dbReference type="SUPFAM" id="SSF52335">
    <property type="entry name" value="Methylglyoxal synthase-like"/>
    <property type="match status" value="1"/>
</dbReference>
<dbReference type="PROSITE" id="PS01335">
    <property type="entry name" value="METHYLGLYOXAL_SYNTH"/>
    <property type="match status" value="1"/>
</dbReference>
<dbReference type="PROSITE" id="PS51855">
    <property type="entry name" value="MGS"/>
    <property type="match status" value="1"/>
</dbReference>
<reference key="1">
    <citation type="journal article" date="2002" name="Proc. Natl. Acad. Sci. U.S.A.">
        <title>Complete genome sequence of Clostridium perfringens, an anaerobic flesh-eater.</title>
        <authorList>
            <person name="Shimizu T."/>
            <person name="Ohtani K."/>
            <person name="Hirakawa H."/>
            <person name="Ohshima K."/>
            <person name="Yamashita A."/>
            <person name="Shiba T."/>
            <person name="Ogasawara N."/>
            <person name="Hattori M."/>
            <person name="Kuhara S."/>
            <person name="Hayashi H."/>
        </authorList>
    </citation>
    <scope>NUCLEOTIDE SEQUENCE [LARGE SCALE GENOMIC DNA]</scope>
    <source>
        <strain>13 / Type A</strain>
    </source>
</reference>
<gene>
    <name evidence="1" type="primary">mgsA</name>
    <name type="ordered locus">CPE1009</name>
</gene>
<comment type="function">
    <text evidence="1">Catalyzes the formation of methylglyoxal from dihydroxyacetone phosphate.</text>
</comment>
<comment type="catalytic activity">
    <reaction evidence="1">
        <text>dihydroxyacetone phosphate = methylglyoxal + phosphate</text>
        <dbReference type="Rhea" id="RHEA:17937"/>
        <dbReference type="ChEBI" id="CHEBI:17158"/>
        <dbReference type="ChEBI" id="CHEBI:43474"/>
        <dbReference type="ChEBI" id="CHEBI:57642"/>
        <dbReference type="EC" id="4.2.3.3"/>
    </reaction>
</comment>
<comment type="similarity">
    <text evidence="1">Belongs to the methylglyoxal synthase family.</text>
</comment>
<name>MGSA_CLOPE</name>
<keyword id="KW-0456">Lyase</keyword>
<keyword id="KW-1185">Reference proteome</keyword>
<evidence type="ECO:0000255" key="1">
    <source>
        <dbReference type="HAMAP-Rule" id="MF_00549"/>
    </source>
</evidence>
<proteinExistence type="inferred from homology"/>
<feature type="chain" id="PRO_0000178622" description="Methylglyoxal synthase">
    <location>
        <begin position="1"/>
        <end position="119"/>
    </location>
</feature>
<feature type="domain" description="MGS-like" evidence="1">
    <location>
        <begin position="1"/>
        <end position="119"/>
    </location>
</feature>
<feature type="active site" description="Proton donor/acceptor" evidence="1">
    <location>
        <position position="60"/>
    </location>
</feature>
<feature type="binding site" evidence="1">
    <location>
        <position position="8"/>
    </location>
    <ligand>
        <name>substrate</name>
    </ligand>
</feature>
<feature type="binding site" evidence="1">
    <location>
        <position position="12"/>
    </location>
    <ligand>
        <name>substrate</name>
    </ligand>
</feature>
<feature type="binding site" evidence="1">
    <location>
        <begin position="34"/>
        <end position="37"/>
    </location>
    <ligand>
        <name>substrate</name>
    </ligand>
</feature>
<feature type="binding site" evidence="1">
    <location>
        <begin position="54"/>
        <end position="55"/>
    </location>
    <ligand>
        <name>substrate</name>
    </ligand>
</feature>
<feature type="binding site" evidence="1">
    <location>
        <position position="87"/>
    </location>
    <ligand>
        <name>substrate</name>
    </ligand>
</feature>